<protein>
    <recommendedName>
        <fullName evidence="14">Diacylglycerol O-acyltransferase 2</fullName>
        <ecNumber evidence="7 10">2.3.1.20</ecNumber>
    </recommendedName>
    <alternativeName>
        <fullName>Acyl-CoA retinol O-fatty-acyltransferase</fullName>
        <shortName>ARAT</shortName>
        <shortName>Retinol O-fatty-acyltransferase</shortName>
        <ecNumber evidence="7">2.3.1.76</ecNumber>
    </alternativeName>
    <alternativeName>
        <fullName>Diglyceride acyltransferase 2</fullName>
    </alternativeName>
</protein>
<reference key="1">
    <citation type="journal article" date="2001" name="J. Biol. Chem.">
        <title>Cloning of DGAT2, a second mammalian diacylglycerol acyltransferase, and related family members.</title>
        <authorList>
            <person name="Cases S."/>
            <person name="Stone S.J."/>
            <person name="Zhou P."/>
            <person name="Yen C.-L.E."/>
            <person name="Tow B."/>
            <person name="Lardizabal K.D."/>
            <person name="Voelker T."/>
            <person name="Farese R.V. Jr."/>
        </authorList>
    </citation>
    <scope>NUCLEOTIDE SEQUENCE [MRNA]</scope>
    <scope>TISSUE SPECIFICITY</scope>
    <source>
        <tissue>Testis</tissue>
    </source>
</reference>
<reference key="2">
    <citation type="journal article" date="2003" name="Biochem. Biophys. Res. Commun.">
        <title>A novel diacylglycerol acyltransferase (DGAT2) is decreased in human psoriatic skin and increased in diabetic mice.</title>
        <authorList>
            <person name="Wakimoto K."/>
            <person name="Chiba H."/>
            <person name="Michibata H."/>
            <person name="Seishima M."/>
            <person name="Kawasaki S."/>
            <person name="Okubo K."/>
            <person name="Mitsui H."/>
            <person name="Torii H."/>
            <person name="Imai Y."/>
        </authorList>
    </citation>
    <scope>NUCLEOTIDE SEQUENCE [MRNA]</scope>
    <scope>SUBCELLULAR LOCATION</scope>
    <scope>TISSUE SPECIFICITY</scope>
</reference>
<reference key="3">
    <citation type="journal article" date="2003" name="Genome Res.">
        <title>The secreted protein discovery initiative (SPDI), a large-scale effort to identify novel human secreted and transmembrane proteins: a bioinformatics assessment.</title>
        <authorList>
            <person name="Clark H.F."/>
            <person name="Gurney A.L."/>
            <person name="Abaya E."/>
            <person name="Baker K."/>
            <person name="Baldwin D.T."/>
            <person name="Brush J."/>
            <person name="Chen J."/>
            <person name="Chow B."/>
            <person name="Chui C."/>
            <person name="Crowley C."/>
            <person name="Currell B."/>
            <person name="Deuel B."/>
            <person name="Dowd P."/>
            <person name="Eaton D."/>
            <person name="Foster J.S."/>
            <person name="Grimaldi C."/>
            <person name="Gu Q."/>
            <person name="Hass P.E."/>
            <person name="Heldens S."/>
            <person name="Huang A."/>
            <person name="Kim H.S."/>
            <person name="Klimowski L."/>
            <person name="Jin Y."/>
            <person name="Johnson S."/>
            <person name="Lee J."/>
            <person name="Lewis L."/>
            <person name="Liao D."/>
            <person name="Mark M.R."/>
            <person name="Robbie E."/>
            <person name="Sanchez C."/>
            <person name="Schoenfeld J."/>
            <person name="Seshagiri S."/>
            <person name="Simmons L."/>
            <person name="Singh J."/>
            <person name="Smith V."/>
            <person name="Stinson J."/>
            <person name="Vagts A."/>
            <person name="Vandlen R.L."/>
            <person name="Watanabe C."/>
            <person name="Wieand D."/>
            <person name="Woods K."/>
            <person name="Xie M.-H."/>
            <person name="Yansura D.G."/>
            <person name="Yi S."/>
            <person name="Yu G."/>
            <person name="Yuan J."/>
            <person name="Zhang M."/>
            <person name="Zhang Z."/>
            <person name="Goddard A.D."/>
            <person name="Wood W.I."/>
            <person name="Godowski P.J."/>
            <person name="Gray A.M."/>
        </authorList>
    </citation>
    <scope>NUCLEOTIDE SEQUENCE [LARGE SCALE MRNA]</scope>
</reference>
<reference key="4">
    <citation type="journal article" date="2007" name="BMC Genomics">
        <title>The full-ORF clone resource of the German cDNA consortium.</title>
        <authorList>
            <person name="Bechtel S."/>
            <person name="Rosenfelder H."/>
            <person name="Duda A."/>
            <person name="Schmidt C.P."/>
            <person name="Ernst U."/>
            <person name="Wellenreuther R."/>
            <person name="Mehrle A."/>
            <person name="Schuster C."/>
            <person name="Bahr A."/>
            <person name="Bloecker H."/>
            <person name="Heubner D."/>
            <person name="Hoerlein A."/>
            <person name="Michel G."/>
            <person name="Wedler H."/>
            <person name="Koehrer K."/>
            <person name="Ottenwaelder B."/>
            <person name="Poustka A."/>
            <person name="Wiemann S."/>
            <person name="Schupp I."/>
        </authorList>
    </citation>
    <scope>NUCLEOTIDE SEQUENCE [LARGE SCALE MRNA]</scope>
    <source>
        <tissue>Lymph node</tissue>
        <tissue>Uterus</tissue>
    </source>
</reference>
<reference key="5">
    <citation type="journal article" date="2006" name="Nature">
        <title>Human chromosome 11 DNA sequence and analysis including novel gene identification.</title>
        <authorList>
            <person name="Taylor T.D."/>
            <person name="Noguchi H."/>
            <person name="Totoki Y."/>
            <person name="Toyoda A."/>
            <person name="Kuroki Y."/>
            <person name="Dewar K."/>
            <person name="Lloyd C."/>
            <person name="Itoh T."/>
            <person name="Takeda T."/>
            <person name="Kim D.-W."/>
            <person name="She X."/>
            <person name="Barlow K.F."/>
            <person name="Bloom T."/>
            <person name="Bruford E."/>
            <person name="Chang J.L."/>
            <person name="Cuomo C.A."/>
            <person name="Eichler E."/>
            <person name="FitzGerald M.G."/>
            <person name="Jaffe D.B."/>
            <person name="LaButti K."/>
            <person name="Nicol R."/>
            <person name="Park H.-S."/>
            <person name="Seaman C."/>
            <person name="Sougnez C."/>
            <person name="Yang X."/>
            <person name="Zimmer A.R."/>
            <person name="Zody M.C."/>
            <person name="Birren B.W."/>
            <person name="Nusbaum C."/>
            <person name="Fujiyama A."/>
            <person name="Hattori M."/>
            <person name="Rogers J."/>
            <person name="Lander E.S."/>
            <person name="Sakaki Y."/>
        </authorList>
    </citation>
    <scope>NUCLEOTIDE SEQUENCE [LARGE SCALE GENOMIC DNA]</scope>
</reference>
<reference key="6">
    <citation type="journal article" date="2004" name="Genome Res.">
        <title>The status, quality, and expansion of the NIH full-length cDNA project: the Mammalian Gene Collection (MGC).</title>
        <authorList>
            <consortium name="The MGC Project Team"/>
        </authorList>
    </citation>
    <scope>NUCLEOTIDE SEQUENCE [LARGE SCALE MRNA]</scope>
    <source>
        <tissue>Pancreas</tissue>
    </source>
</reference>
<reference key="7">
    <citation type="submission" date="2004-10" db="EMBL/GenBank/DDBJ databases">
        <title>Evaluation of gene structure of human DGAT2 gene.</title>
        <authorList>
            <person name="Reichwald K."/>
            <person name="Petz U."/>
            <person name="Platzer M."/>
        </authorList>
    </citation>
    <scope>NUCLEOTIDE SEQUENCE [MRNA] OF 4-341 (ISOFORM 2)</scope>
    <source>
        <tissue>Adipocyte</tissue>
    </source>
</reference>
<reference key="8">
    <citation type="journal article" date="2004" name="Oncogene">
        <title>Expression profiling and differential screening between hepatoblastomas and the corresponding normal livers: identification of high expression of the PLK1 oncogene as a poor-prognostic indicator of hepatoblastomas.</title>
        <authorList>
            <person name="Yamada S."/>
            <person name="Ohira M."/>
            <person name="Horie H."/>
            <person name="Ando K."/>
            <person name="Takayasu H."/>
            <person name="Suzuki Y."/>
            <person name="Sugano S."/>
            <person name="Hirata T."/>
            <person name="Goto T."/>
            <person name="Matsunaga T."/>
            <person name="Hiyama E."/>
            <person name="Hayashi Y."/>
            <person name="Ando H."/>
            <person name="Suita S."/>
            <person name="Kaneko M."/>
            <person name="Sasaki F."/>
            <person name="Hashizume K."/>
            <person name="Ohnuma N."/>
            <person name="Nakagawara A."/>
        </authorList>
    </citation>
    <scope>NUCLEOTIDE SEQUENCE [LARGE SCALE MRNA] OF 66-388</scope>
    <source>
        <tissue>Hepatoblastoma</tissue>
    </source>
</reference>
<reference key="9">
    <citation type="journal article" date="2005" name="Biochim. Biophys. Acta">
        <title>Acyl coenzyme A dependent retinol esterification by acyl coenzyme A: diacylglycerol acyltransferase 1.</title>
        <authorList>
            <person name="Orland M.D."/>
            <person name="Anwar K."/>
            <person name="Cromley D."/>
            <person name="Chu C.H."/>
            <person name="Chen L."/>
            <person name="Billheimer J.T."/>
            <person name="Hussain M.M."/>
            <person name="Cheng D."/>
        </authorList>
    </citation>
    <scope>CATALYTIC ACTIVITY</scope>
</reference>
<reference key="10">
    <citation type="journal article" date="2008" name="J. Biol. Chem.">
        <title>Acylation of acylglycerols by acyl coenzyme A:diacylglycerol acyltransferase 1 (DGAT1). Functional importance of DGAT1 in the intestinal fat absorption.</title>
        <authorList>
            <person name="Cheng D."/>
            <person name="Iqbal J."/>
            <person name="Devenny J."/>
            <person name="Chu C.H."/>
            <person name="Chen L."/>
            <person name="Dong J."/>
            <person name="Seethala R."/>
            <person name="Keim W.J."/>
            <person name="Azzara A.V."/>
            <person name="Lawrence R.M."/>
            <person name="Pelleymounter M.A."/>
            <person name="Hussain M.M."/>
        </authorList>
    </citation>
    <scope>CATALYTIC ACTIVITY</scope>
</reference>
<reference key="11">
    <citation type="journal article" date="2016" name="Biochem. Biophys. Res. Commun.">
        <title>Biochemical characterization of human acyl coenzyme A: 2-monoacylglycerol acyltransferase-3 (MGAT3).</title>
        <authorList>
            <person name="Brandt C."/>
            <person name="McFie P.J."/>
            <person name="Stone S.J."/>
        </authorList>
    </citation>
    <scope>FUNCTION</scope>
    <scope>CATALYTIC ACTIVITY</scope>
    <scope>SUBCELLULAR LOCATION</scope>
</reference>
<reference key="12">
    <citation type="journal article" date="2017" name="J. Lipid Res.">
        <title>Synthesis of neutral ether lipid monoalkyl-diacylglycerol by lipid acyltransferases.</title>
        <authorList>
            <person name="Ma Z."/>
            <person name="Onorato J.M."/>
            <person name="Chen L."/>
            <person name="Nelson D.W."/>
            <person name="Yen C.E."/>
            <person name="Cheng D."/>
        </authorList>
    </citation>
    <scope>CATALYTIC ACTIVITY</scope>
    <scope>FUNCTION</scope>
</reference>
<reference key="13">
    <citation type="journal article" date="2019" name="Cell Rep.">
        <title>The ER-Localized Protein DFCP1 Modulates ER-Lipid Droplet Contact Formation.</title>
        <authorList>
            <person name="Li D."/>
            <person name="Zhao Y.G."/>
            <person name="Li D."/>
            <person name="Zhao H."/>
            <person name="Huang J."/>
            <person name="Miao G."/>
            <person name="Feng D."/>
            <person name="Liu P."/>
            <person name="Li D."/>
            <person name="Zhang H."/>
        </authorList>
    </citation>
    <scope>INTERACTION WITH SLC27A1</scope>
</reference>
<reference key="14">
    <citation type="journal article" date="2016" name="Hum. Mutat.">
        <title>DGAT2 mutation in a family with autosomal-dominant early-onset axonal Charcot-Marie-Tooth disease.</title>
        <authorList>
            <person name="Hong Y.B."/>
            <person name="Kang J."/>
            <person name="Kim J.H."/>
            <person name="Lee J."/>
            <person name="Kwak G."/>
            <person name="Hyun Y.S."/>
            <person name="Nam S.H."/>
            <person name="Hong H.D."/>
            <person name="Choi Y.R."/>
            <person name="Jung S.C."/>
            <person name="Koo H."/>
            <person name="Lee J.E."/>
            <person name="Choi B.O."/>
            <person name="Chung K.W."/>
        </authorList>
    </citation>
    <scope>VARIANT HIS-223</scope>
</reference>
<accession>Q96PD7</accession>
<accession>A6ND76</accession>
<accession>Q5U810</accession>
<accession>Q68CL3</accession>
<accession>Q68DJ0</accession>
<accession>Q8NDB7</accession>
<accession>Q96BS0</accession>
<accession>Q9BYE5</accession>
<keyword id="KW-0012">Acyltransferase</keyword>
<keyword id="KW-0025">Alternative splicing</keyword>
<keyword id="KW-0963">Cytoplasm</keyword>
<keyword id="KW-0256">Endoplasmic reticulum</keyword>
<keyword id="KW-0319">Glycerol metabolism</keyword>
<keyword id="KW-0444">Lipid biosynthesis</keyword>
<keyword id="KW-0551">Lipid droplet</keyword>
<keyword id="KW-0443">Lipid metabolism</keyword>
<keyword id="KW-0472">Membrane</keyword>
<keyword id="KW-1267">Proteomics identification</keyword>
<keyword id="KW-1185">Reference proteome</keyword>
<keyword id="KW-0808">Transferase</keyword>
<keyword id="KW-0812">Transmembrane</keyword>
<keyword id="KW-1133">Transmembrane helix</keyword>
<name>DGAT2_HUMAN</name>
<comment type="function">
    <text evidence="2 10 11">Essential acyltransferase that catalyzes the terminal and only committed step in triacylglycerol synthesis by using diacylglycerol and fatty acyl CoA as substrates. Required for synthesis and storage of intracellular triglycerides (PubMed:27184406). Probably plays a central role in cytosolic lipid accumulation. In liver, is primarily responsible for incorporating endogenously synthesized fatty acids into triglycerides (By similarity). Also functions as an acyl-CoA retinol acyltransferase (ARAT) (By similarity). Also able to use 1-monoalkylglycerol (1-MAkG) as an acyl acceptor for the synthesis of monoalkyl-monoacylglycerol (MAMAG) (PubMed:28420705).</text>
</comment>
<comment type="catalytic activity">
    <reaction evidence="7 10">
        <text>an acyl-CoA + a 1,2-diacyl-sn-glycerol = a triacyl-sn-glycerol + CoA</text>
        <dbReference type="Rhea" id="RHEA:10868"/>
        <dbReference type="ChEBI" id="CHEBI:17815"/>
        <dbReference type="ChEBI" id="CHEBI:57287"/>
        <dbReference type="ChEBI" id="CHEBI:58342"/>
        <dbReference type="ChEBI" id="CHEBI:64615"/>
        <dbReference type="EC" id="2.3.1.20"/>
    </reaction>
    <physiologicalReaction direction="left-to-right" evidence="14">
        <dbReference type="Rhea" id="RHEA:10869"/>
    </physiologicalReaction>
</comment>
<comment type="catalytic activity">
    <reaction evidence="7">
        <text>all-trans-retinol + an acyl-CoA = an all-trans-retinyl ester + CoA</text>
        <dbReference type="Rhea" id="RHEA:11488"/>
        <dbReference type="ChEBI" id="CHEBI:17336"/>
        <dbReference type="ChEBI" id="CHEBI:57287"/>
        <dbReference type="ChEBI" id="CHEBI:58342"/>
        <dbReference type="ChEBI" id="CHEBI:63410"/>
        <dbReference type="EC" id="2.3.1.76"/>
    </reaction>
    <physiologicalReaction direction="left-to-right" evidence="14">
        <dbReference type="Rhea" id="RHEA:11489"/>
    </physiologicalReaction>
</comment>
<comment type="catalytic activity">
    <reaction evidence="8">
        <text>2-(9Z-octadecenoyl)-glycerol + (9Z)-octadecenoyl-CoA = 1,2-di-(9Z-octadecenoyl)-sn-glycerol + CoA</text>
        <dbReference type="Rhea" id="RHEA:37911"/>
        <dbReference type="ChEBI" id="CHEBI:52333"/>
        <dbReference type="ChEBI" id="CHEBI:57287"/>
        <dbReference type="ChEBI" id="CHEBI:57387"/>
        <dbReference type="ChEBI" id="CHEBI:73990"/>
    </reaction>
    <physiologicalReaction direction="left-to-right" evidence="16">
        <dbReference type="Rhea" id="RHEA:37912"/>
    </physiologicalReaction>
</comment>
<comment type="catalytic activity">
    <reaction evidence="8">
        <text>1,2-di-(9Z-octadecenoyl)-sn-glycerol + (9Z)-octadecenoyl-CoA = 1,2,3-tri-(9Z-octadecenoyl)-glycerol + CoA</text>
        <dbReference type="Rhea" id="RHEA:38219"/>
        <dbReference type="ChEBI" id="CHEBI:52333"/>
        <dbReference type="ChEBI" id="CHEBI:53753"/>
        <dbReference type="ChEBI" id="CHEBI:57287"/>
        <dbReference type="ChEBI" id="CHEBI:57387"/>
    </reaction>
    <physiologicalReaction direction="left-to-right" evidence="16">
        <dbReference type="Rhea" id="RHEA:38220"/>
    </physiologicalReaction>
</comment>
<comment type="catalytic activity">
    <reaction evidence="7">
        <text>all-trans-retinol + hexadecanoyl-CoA = all-trans-retinyl hexadecanoate + CoA</text>
        <dbReference type="Rhea" id="RHEA:38175"/>
        <dbReference type="ChEBI" id="CHEBI:17336"/>
        <dbReference type="ChEBI" id="CHEBI:17616"/>
        <dbReference type="ChEBI" id="CHEBI:57287"/>
        <dbReference type="ChEBI" id="CHEBI:57379"/>
    </reaction>
    <physiologicalReaction direction="left-to-right" evidence="15">
        <dbReference type="Rhea" id="RHEA:38176"/>
    </physiologicalReaction>
</comment>
<comment type="catalytic activity">
    <reaction evidence="11">
        <text>1-O-(9Z-octadecenyl)-glycerol + (9Z)-octadecenoyl-CoA = 1-O-(9Z-octadecyl)-3-(9Z-octadecenoyl)-glycerol + CoA</text>
        <dbReference type="Rhea" id="RHEA:55340"/>
        <dbReference type="ChEBI" id="CHEBI:34116"/>
        <dbReference type="ChEBI" id="CHEBI:57287"/>
        <dbReference type="ChEBI" id="CHEBI:57387"/>
        <dbReference type="ChEBI" id="CHEBI:197429"/>
    </reaction>
    <physiologicalReaction direction="left-to-right" evidence="17">
        <dbReference type="Rhea" id="RHEA:55341"/>
    </physiologicalReaction>
</comment>
<comment type="catalytic activity">
    <reaction evidence="11">
        <text>1-(9Z-octadecenoyl)-glycerol + (9Z)-octadecenoyl-CoA = 1,2-di-(9Z-octadecenoyl)-glycerol + CoA</text>
        <dbReference type="Rhea" id="RHEA:37915"/>
        <dbReference type="ChEBI" id="CHEBI:52323"/>
        <dbReference type="ChEBI" id="CHEBI:57287"/>
        <dbReference type="ChEBI" id="CHEBI:57387"/>
        <dbReference type="ChEBI" id="CHEBI:75342"/>
    </reaction>
    <physiologicalReaction direction="left-to-right" evidence="17">
        <dbReference type="Rhea" id="RHEA:37916"/>
    </physiologicalReaction>
</comment>
<comment type="catalytic activity">
    <reaction evidence="2">
        <text>1,2-di-(9Z-octadecenoyl)-sn-glycerol + hexadecanoyl-CoA = 1,2-di-(9Z)-octadecenoyl-3-hexadecanoyl-sn-glycerol + CoA</text>
        <dbReference type="Rhea" id="RHEA:38163"/>
        <dbReference type="ChEBI" id="CHEBI:52333"/>
        <dbReference type="ChEBI" id="CHEBI:57287"/>
        <dbReference type="ChEBI" id="CHEBI:57379"/>
        <dbReference type="ChEBI" id="CHEBI:75583"/>
    </reaction>
    <physiologicalReaction direction="left-to-right" evidence="2">
        <dbReference type="Rhea" id="RHEA:38164"/>
    </physiologicalReaction>
</comment>
<comment type="catalytic activity">
    <reaction evidence="2">
        <text>1,3-di-(9Z-octadecenoyl)-glycerol + (9Z)-octadecenoyl-CoA = 1,2,3-tri-(9Z-octadecenoyl)-glycerol + CoA</text>
        <dbReference type="Rhea" id="RHEA:38435"/>
        <dbReference type="ChEBI" id="CHEBI:53753"/>
        <dbReference type="ChEBI" id="CHEBI:57287"/>
        <dbReference type="ChEBI" id="CHEBI:57387"/>
        <dbReference type="ChEBI" id="CHEBI:75735"/>
    </reaction>
    <physiologicalReaction direction="left-to-right" evidence="2">
        <dbReference type="Rhea" id="RHEA:38436"/>
    </physiologicalReaction>
</comment>
<comment type="catalytic activity">
    <reaction evidence="2">
        <text>2,3-di-(9Z)-octadecenoyl-sn-glycerol + (9Z)-octadecenoyl-CoA = 1,2,3-tri-(9Z-octadecenoyl)-glycerol + CoA</text>
        <dbReference type="Rhea" id="RHEA:38439"/>
        <dbReference type="ChEBI" id="CHEBI:53753"/>
        <dbReference type="ChEBI" id="CHEBI:57287"/>
        <dbReference type="ChEBI" id="CHEBI:57387"/>
        <dbReference type="ChEBI" id="CHEBI:75824"/>
    </reaction>
    <physiologicalReaction direction="left-to-right" evidence="2">
        <dbReference type="Rhea" id="RHEA:38440"/>
    </physiologicalReaction>
</comment>
<comment type="catalytic activity">
    <reaction evidence="2">
        <text>2-(9Z-octadecenoyl)-glycerol + hexadecanoyl-CoA = 1-hexadecanoyl-2-(9Z-octadecenoyl)-sn-glycerol + CoA</text>
        <dbReference type="Rhea" id="RHEA:38071"/>
        <dbReference type="ChEBI" id="CHEBI:57287"/>
        <dbReference type="ChEBI" id="CHEBI:57379"/>
        <dbReference type="ChEBI" id="CHEBI:73990"/>
        <dbReference type="ChEBI" id="CHEBI:75466"/>
    </reaction>
    <physiologicalReaction direction="left-to-right" evidence="2">
        <dbReference type="Rhea" id="RHEA:38072"/>
    </physiologicalReaction>
</comment>
<comment type="activity regulation">
    <text evidence="1">Inhibited by niacin.</text>
</comment>
<comment type="pathway">
    <text evidence="10">Glycerolipid metabolism; triacylglycerol biosynthesis.</text>
</comment>
<comment type="subunit">
    <text evidence="2 12">Forms multimeric complexes consisting of several DGAT2 subunits (By similarity). Interacts with SLC27A1 and this interaction is enhanced in the presence of ZFYVE1 (PubMed:30970241).</text>
</comment>
<comment type="subcellular location">
    <subcellularLocation>
        <location evidence="6 10">Endoplasmic reticulum membrane</location>
        <topology evidence="6">Multi-pass membrane protein</topology>
    </subcellularLocation>
    <subcellularLocation>
        <location evidence="10">Lipid droplet</location>
    </subcellularLocation>
    <subcellularLocation>
        <location evidence="10">Cytoplasm</location>
        <location evidence="10">Perinuclear region</location>
    </subcellularLocation>
</comment>
<comment type="alternative products">
    <event type="alternative splicing"/>
    <isoform>
        <id>Q96PD7-1</id>
        <name>1</name>
        <sequence type="displayed"/>
    </isoform>
    <isoform>
        <id>Q96PD7-2</id>
        <name>2</name>
        <sequence type="described" ref="VSP_020356"/>
    </isoform>
</comment>
<comment type="tissue specificity">
    <text evidence="5 6">Predominantly expressed in liver and white adipose tissue. Expressed at lower level in mammary gland, testis and peripheral blood leukocytes. Expressed in sebaceous glands of normal skin but decreased psoriatic skin.</text>
</comment>
<comment type="similarity">
    <text evidence="14">Belongs to the diacylglycerol acyltransferase family.</text>
</comment>
<comment type="sequence caution" evidence="14">
    <conflict type="erroneous initiation">
        <sequence resource="EMBL-CDS" id="BAD38635"/>
    </conflict>
    <text>Truncated N-terminus.</text>
</comment>
<comment type="sequence caution" evidence="14">
    <conflict type="erroneous initiation">
        <sequence resource="EMBL-CDS" id="CAD38961"/>
    </conflict>
    <text>Extended N-terminus.</text>
</comment>
<sequence length="388" mass="43831">MKTLIAAYSGVLRGERQAEADRSQRSHGGPALSREGSGRWGTGSSILSALQDLFSVTWLNRSKVEKQLQVISVLQWVLSFLVLGVACSAILMYIFCTDCWLIAVLYFTWLVFDWNTPKKGGRRSQWVRNWAVWRYFRDYFPIQLVKTHNLLTTRNYIFGYHPHGIMGLGAFCNFSTEATEVSKKFPGIRPYLATLAGNFRMPVLREYLMSGGICPVSRDTIDYLLSKNGSGNAIIIVVGGAAESLSSMPGKNAVTLRNRKGFVKLALRHGADLVPIYSFGENEVYKQVIFEEGSWGRWVQKKFQKYIGFAPCIFHGRGLFSSDTWGLVPYSKPITTVVGEPITIPKLEHPTQQDIDLYHTMYMEALVKLFDKHKTKFGLPETEVLEVN</sequence>
<dbReference type="EC" id="2.3.1.20" evidence="7 10"/>
<dbReference type="EC" id="2.3.1.76" evidence="7"/>
<dbReference type="EMBL" id="AF384161">
    <property type="protein sequence ID" value="AAK84176.2"/>
    <property type="molecule type" value="mRNA"/>
</dbReference>
<dbReference type="EMBL" id="AB048286">
    <property type="protein sequence ID" value="BAB40641.2"/>
    <property type="molecule type" value="mRNA"/>
</dbReference>
<dbReference type="EMBL" id="AY358532">
    <property type="protein sequence ID" value="AAQ88896.1"/>
    <property type="molecule type" value="mRNA"/>
</dbReference>
<dbReference type="EMBL" id="AL834287">
    <property type="protein sequence ID" value="CAD38961.1"/>
    <property type="status" value="ALT_INIT"/>
    <property type="molecule type" value="mRNA"/>
</dbReference>
<dbReference type="EMBL" id="CR749377">
    <property type="protein sequence ID" value="CAH18230.1"/>
    <property type="molecule type" value="mRNA"/>
</dbReference>
<dbReference type="EMBL" id="AP001922">
    <property type="status" value="NOT_ANNOTATED_CDS"/>
    <property type="molecule type" value="Genomic_DNA"/>
</dbReference>
<dbReference type="EMBL" id="BC015234">
    <property type="protein sequence ID" value="AAH15234.1"/>
    <property type="molecule type" value="mRNA"/>
</dbReference>
<dbReference type="EMBL" id="AY780647">
    <property type="protein sequence ID" value="AAV35727.1"/>
    <property type="molecule type" value="mRNA"/>
</dbReference>
<dbReference type="EMBL" id="AB073384">
    <property type="protein sequence ID" value="BAD38635.1"/>
    <property type="status" value="ALT_INIT"/>
    <property type="molecule type" value="mRNA"/>
</dbReference>
<dbReference type="CCDS" id="CCDS31642.1">
    <molecule id="Q96PD7-1"/>
</dbReference>
<dbReference type="CCDS" id="CCDS58162.1">
    <molecule id="Q96PD7-2"/>
</dbReference>
<dbReference type="RefSeq" id="NP_001240820.1">
    <molecule id="Q96PD7-2"/>
    <property type="nucleotide sequence ID" value="NM_001253891.2"/>
</dbReference>
<dbReference type="RefSeq" id="NP_115953.2">
    <molecule id="Q96PD7-1"/>
    <property type="nucleotide sequence ID" value="NM_032564.4"/>
</dbReference>
<dbReference type="SMR" id="Q96PD7"/>
<dbReference type="BioGRID" id="124172">
    <property type="interactions" value="8"/>
</dbReference>
<dbReference type="CORUM" id="Q96PD7"/>
<dbReference type="FunCoup" id="Q96PD7">
    <property type="interactions" value="743"/>
</dbReference>
<dbReference type="IntAct" id="Q96PD7">
    <property type="interactions" value="3"/>
</dbReference>
<dbReference type="MINT" id="Q96PD7"/>
<dbReference type="STRING" id="9606.ENSP00000228027"/>
<dbReference type="BindingDB" id="Q96PD7"/>
<dbReference type="ChEMBL" id="CHEMBL5853"/>
<dbReference type="DrugBank" id="DB13961">
    <property type="generic name" value="Fish oil"/>
</dbReference>
<dbReference type="DrugBank" id="DB08949">
    <property type="generic name" value="Inositol nicotinate"/>
</dbReference>
<dbReference type="DrugBank" id="DB00627">
    <property type="generic name" value="Niacin"/>
</dbReference>
<dbReference type="DrugBank" id="DB09568">
    <property type="generic name" value="Omega-3-carboxylic acids"/>
</dbReference>
<dbReference type="GuidetoPHARMACOLOGY" id="3211"/>
<dbReference type="SwissLipids" id="SLP:000000304"/>
<dbReference type="GlyGen" id="Q96PD7">
    <property type="glycosylation" value="1 site, 6 N-linked glycans (1 site)"/>
</dbReference>
<dbReference type="iPTMnet" id="Q96PD7"/>
<dbReference type="PhosphoSitePlus" id="Q96PD7"/>
<dbReference type="BioMuta" id="DGAT2"/>
<dbReference type="DMDM" id="74732654"/>
<dbReference type="jPOST" id="Q96PD7"/>
<dbReference type="MassIVE" id="Q96PD7"/>
<dbReference type="PaxDb" id="9606-ENSP00000228027"/>
<dbReference type="PeptideAtlas" id="Q96PD7"/>
<dbReference type="Antibodypedia" id="1632">
    <property type="antibodies" value="307 antibodies from 36 providers"/>
</dbReference>
<dbReference type="DNASU" id="84649"/>
<dbReference type="Ensembl" id="ENST00000228027.12">
    <molecule id="Q96PD7-1"/>
    <property type="protein sequence ID" value="ENSP00000228027.6"/>
    <property type="gene ID" value="ENSG00000062282.15"/>
</dbReference>
<dbReference type="Ensembl" id="ENST00000376262.7">
    <molecule id="Q96PD7-2"/>
    <property type="protein sequence ID" value="ENSP00000365438.3"/>
    <property type="gene ID" value="ENSG00000062282.15"/>
</dbReference>
<dbReference type="GeneID" id="84649"/>
<dbReference type="KEGG" id="hsa:84649"/>
<dbReference type="MANE-Select" id="ENST00000228027.12">
    <property type="protein sequence ID" value="ENSP00000228027.6"/>
    <property type="RefSeq nucleotide sequence ID" value="NM_032564.5"/>
    <property type="RefSeq protein sequence ID" value="NP_115953.2"/>
</dbReference>
<dbReference type="UCSC" id="uc001oxa.4">
    <molecule id="Q96PD7-1"/>
    <property type="organism name" value="human"/>
</dbReference>
<dbReference type="AGR" id="HGNC:16940"/>
<dbReference type="CTD" id="84649"/>
<dbReference type="DisGeNET" id="84649"/>
<dbReference type="GeneCards" id="DGAT2"/>
<dbReference type="GeneReviews" id="DGAT2"/>
<dbReference type="HGNC" id="HGNC:16940">
    <property type="gene designation" value="DGAT2"/>
</dbReference>
<dbReference type="HPA" id="ENSG00000062282">
    <property type="expression patterns" value="Group enriched (adipose tissue, breast, liver, skin)"/>
</dbReference>
<dbReference type="MalaCards" id="DGAT2"/>
<dbReference type="MIM" id="606983">
    <property type="type" value="gene"/>
</dbReference>
<dbReference type="neXtProt" id="NX_Q96PD7"/>
<dbReference type="OpenTargets" id="ENSG00000062282"/>
<dbReference type="Orphanet" id="487814">
    <property type="disease" value="Autosomal dominant Charcot-Marie-Tooth disease type 2 due to DGAT2 mutation"/>
</dbReference>
<dbReference type="PharmGKB" id="PA27304"/>
<dbReference type="VEuPathDB" id="HostDB:ENSG00000062282"/>
<dbReference type="eggNOG" id="KOG0831">
    <property type="taxonomic scope" value="Eukaryota"/>
</dbReference>
<dbReference type="GeneTree" id="ENSGT01030000234582"/>
<dbReference type="HOGENOM" id="CLU_023995_0_1_1"/>
<dbReference type="InParanoid" id="Q96PD7"/>
<dbReference type="OMA" id="IMGVACT"/>
<dbReference type="OrthoDB" id="264532at2759"/>
<dbReference type="PAN-GO" id="Q96PD7">
    <property type="GO annotations" value="4 GO annotations based on evolutionary models"/>
</dbReference>
<dbReference type="PhylomeDB" id="Q96PD7"/>
<dbReference type="TreeFam" id="TF314707"/>
<dbReference type="BRENDA" id="2.3.1.20">
    <property type="organism ID" value="2681"/>
</dbReference>
<dbReference type="PathwayCommons" id="Q96PD7"/>
<dbReference type="Reactome" id="R-HSA-1482883">
    <property type="pathway name" value="Acyl chain remodeling of DAG and TAG"/>
</dbReference>
<dbReference type="Reactome" id="R-HSA-75109">
    <property type="pathway name" value="Triglyceride biosynthesis"/>
</dbReference>
<dbReference type="Reactome" id="R-HSA-9841922">
    <property type="pathway name" value="MLL4 and MLL3 complexes regulate expression of PPARG target genes in adipogenesis and hepatic steatosis"/>
</dbReference>
<dbReference type="SABIO-RK" id="Q96PD7"/>
<dbReference type="SignaLink" id="Q96PD7"/>
<dbReference type="UniPathway" id="UPA00282"/>
<dbReference type="BioGRID-ORCS" id="84649">
    <property type="hits" value="16 hits in 1161 CRISPR screens"/>
</dbReference>
<dbReference type="ChiTaRS" id="DGAT2">
    <property type="organism name" value="human"/>
</dbReference>
<dbReference type="GenomeRNAi" id="84649"/>
<dbReference type="Pharos" id="Q96PD7">
    <property type="development level" value="Tchem"/>
</dbReference>
<dbReference type="PRO" id="PR:Q96PD7"/>
<dbReference type="Proteomes" id="UP000005640">
    <property type="component" value="Chromosome 11"/>
</dbReference>
<dbReference type="RNAct" id="Q96PD7">
    <property type="molecule type" value="protein"/>
</dbReference>
<dbReference type="Bgee" id="ENSG00000062282">
    <property type="expression patterns" value="Expressed in upper arm skin and 152 other cell types or tissues"/>
</dbReference>
<dbReference type="ExpressionAtlas" id="Q96PD7">
    <property type="expression patterns" value="baseline and differential"/>
</dbReference>
<dbReference type="GO" id="GO:0005829">
    <property type="term" value="C:cytosol"/>
    <property type="evidence" value="ECO:0000314"/>
    <property type="project" value="HPA"/>
</dbReference>
<dbReference type="GO" id="GO:0005783">
    <property type="term" value="C:endoplasmic reticulum"/>
    <property type="evidence" value="ECO:0000314"/>
    <property type="project" value="BHF-UCL"/>
</dbReference>
<dbReference type="GO" id="GO:0005789">
    <property type="term" value="C:endoplasmic reticulum membrane"/>
    <property type="evidence" value="ECO:0000314"/>
    <property type="project" value="UniProtKB"/>
</dbReference>
<dbReference type="GO" id="GO:0043231">
    <property type="term" value="C:intracellular membrane-bounded organelle"/>
    <property type="evidence" value="ECO:0000314"/>
    <property type="project" value="HPA"/>
</dbReference>
<dbReference type="GO" id="GO:0005811">
    <property type="term" value="C:lipid droplet"/>
    <property type="evidence" value="ECO:0000314"/>
    <property type="project" value="UniProtKB"/>
</dbReference>
<dbReference type="GO" id="GO:0016020">
    <property type="term" value="C:membrane"/>
    <property type="evidence" value="ECO:0000314"/>
    <property type="project" value="BHF-UCL"/>
</dbReference>
<dbReference type="GO" id="GO:0005739">
    <property type="term" value="C:mitochondrion"/>
    <property type="evidence" value="ECO:0007669"/>
    <property type="project" value="Ensembl"/>
</dbReference>
<dbReference type="GO" id="GO:1990578">
    <property type="term" value="C:perinuclear endoplasmic reticulum membrane"/>
    <property type="evidence" value="ECO:0000314"/>
    <property type="project" value="UniProtKB"/>
</dbReference>
<dbReference type="GO" id="GO:0048471">
    <property type="term" value="C:perinuclear region of cytoplasm"/>
    <property type="evidence" value="ECO:0000250"/>
    <property type="project" value="BHF-UCL"/>
</dbReference>
<dbReference type="GO" id="GO:0003846">
    <property type="term" value="F:2-acylglycerol O-acyltransferase activity"/>
    <property type="evidence" value="ECO:0007669"/>
    <property type="project" value="Ensembl"/>
</dbReference>
<dbReference type="GO" id="GO:0004144">
    <property type="term" value="F:diacylglycerol O-acyltransferase activity"/>
    <property type="evidence" value="ECO:0000314"/>
    <property type="project" value="UniProtKB"/>
</dbReference>
<dbReference type="GO" id="GO:0042803">
    <property type="term" value="F:protein homodimerization activity"/>
    <property type="evidence" value="ECO:0000250"/>
    <property type="project" value="BHF-UCL"/>
</dbReference>
<dbReference type="GO" id="GO:0050252">
    <property type="term" value="F:retinol O-fatty-acyltransferase activity"/>
    <property type="evidence" value="ECO:0007669"/>
    <property type="project" value="UniProtKB-EC"/>
</dbReference>
<dbReference type="GO" id="GO:0071400">
    <property type="term" value="P:cellular response to oleic acid"/>
    <property type="evidence" value="ECO:0000250"/>
    <property type="project" value="BHF-UCL"/>
</dbReference>
<dbReference type="GO" id="GO:0042632">
    <property type="term" value="P:cholesterol homeostasis"/>
    <property type="evidence" value="ECO:0000250"/>
    <property type="project" value="BHF-UCL"/>
</dbReference>
<dbReference type="GO" id="GO:0006651">
    <property type="term" value="P:diacylglycerol biosynthetic process"/>
    <property type="evidence" value="ECO:0000250"/>
    <property type="project" value="UniProtKB"/>
</dbReference>
<dbReference type="GO" id="GO:0046339">
    <property type="term" value="P:diacylglycerol metabolic process"/>
    <property type="evidence" value="ECO:0000314"/>
    <property type="project" value="BHF-UCL"/>
</dbReference>
<dbReference type="GO" id="GO:0060613">
    <property type="term" value="P:fat pad development"/>
    <property type="evidence" value="ECO:0000250"/>
    <property type="project" value="BHF-UCL"/>
</dbReference>
<dbReference type="GO" id="GO:0055089">
    <property type="term" value="P:fatty acid homeostasis"/>
    <property type="evidence" value="ECO:0000250"/>
    <property type="project" value="BHF-UCL"/>
</dbReference>
<dbReference type="GO" id="GO:0006071">
    <property type="term" value="P:glycerol metabolic process"/>
    <property type="evidence" value="ECO:0007669"/>
    <property type="project" value="UniProtKB-KW"/>
</dbReference>
<dbReference type="GO" id="GO:0035356">
    <property type="term" value="P:intracellular triglyceride homeostasis"/>
    <property type="evidence" value="ECO:0000250"/>
    <property type="project" value="BHF-UCL"/>
</dbReference>
<dbReference type="GO" id="GO:0019915">
    <property type="term" value="P:lipid storage"/>
    <property type="evidence" value="ECO:0000250"/>
    <property type="project" value="BHF-UCL"/>
</dbReference>
<dbReference type="GO" id="GO:0035336">
    <property type="term" value="P:long-chain fatty-acyl-CoA metabolic process"/>
    <property type="evidence" value="ECO:0000314"/>
    <property type="project" value="BHF-UCL"/>
</dbReference>
<dbReference type="GO" id="GO:0034383">
    <property type="term" value="P:low-density lipoprotein particle clearance"/>
    <property type="evidence" value="ECO:0000250"/>
    <property type="project" value="BHF-UCL"/>
</dbReference>
<dbReference type="GO" id="GO:0006640">
    <property type="term" value="P:monoacylglycerol biosynthetic process"/>
    <property type="evidence" value="ECO:0000314"/>
    <property type="project" value="UniProtKB"/>
</dbReference>
<dbReference type="GO" id="GO:0046322">
    <property type="term" value="P:negative regulation of fatty acid oxidation"/>
    <property type="evidence" value="ECO:0007669"/>
    <property type="project" value="Ensembl"/>
</dbReference>
<dbReference type="GO" id="GO:0045722">
    <property type="term" value="P:positive regulation of gluconeogenesis"/>
    <property type="evidence" value="ECO:0007669"/>
    <property type="project" value="Ensembl"/>
</dbReference>
<dbReference type="GO" id="GO:0010867">
    <property type="term" value="P:positive regulation of triglyceride biosynthetic process"/>
    <property type="evidence" value="ECO:0007669"/>
    <property type="project" value="Ensembl"/>
</dbReference>
<dbReference type="GO" id="GO:0090181">
    <property type="term" value="P:regulation of cholesterol metabolic process"/>
    <property type="evidence" value="ECO:0007669"/>
    <property type="project" value="Ensembl"/>
</dbReference>
<dbReference type="GO" id="GO:0050746">
    <property type="term" value="P:regulation of lipoprotein metabolic process"/>
    <property type="evidence" value="ECO:0007669"/>
    <property type="project" value="Ensembl"/>
</dbReference>
<dbReference type="GO" id="GO:0097006">
    <property type="term" value="P:regulation of plasma lipoprotein particle levels"/>
    <property type="evidence" value="ECO:0000250"/>
    <property type="project" value="BHF-UCL"/>
</dbReference>
<dbReference type="GO" id="GO:0007584">
    <property type="term" value="P:response to nutrient"/>
    <property type="evidence" value="ECO:0007669"/>
    <property type="project" value="Ensembl"/>
</dbReference>
<dbReference type="GO" id="GO:0019432">
    <property type="term" value="P:triglyceride biosynthetic process"/>
    <property type="evidence" value="ECO:0000314"/>
    <property type="project" value="UniProtKB"/>
</dbReference>
<dbReference type="CDD" id="cd07987">
    <property type="entry name" value="LPLAT_MGAT-like"/>
    <property type="match status" value="1"/>
</dbReference>
<dbReference type="InterPro" id="IPR007130">
    <property type="entry name" value="DAGAT"/>
</dbReference>
<dbReference type="PANTHER" id="PTHR12317">
    <property type="entry name" value="DIACYLGLYCEROL O-ACYLTRANSFERASE"/>
    <property type="match status" value="1"/>
</dbReference>
<dbReference type="PANTHER" id="PTHR12317:SF14">
    <property type="entry name" value="DIACYLGLYCEROL O-ACYLTRANSFERASE 2"/>
    <property type="match status" value="1"/>
</dbReference>
<dbReference type="Pfam" id="PF03982">
    <property type="entry name" value="DAGAT"/>
    <property type="match status" value="1"/>
</dbReference>
<proteinExistence type="evidence at protein level"/>
<organism>
    <name type="scientific">Homo sapiens</name>
    <name type="common">Human</name>
    <dbReference type="NCBI Taxonomy" id="9606"/>
    <lineage>
        <taxon>Eukaryota</taxon>
        <taxon>Metazoa</taxon>
        <taxon>Chordata</taxon>
        <taxon>Craniata</taxon>
        <taxon>Vertebrata</taxon>
        <taxon>Euteleostomi</taxon>
        <taxon>Mammalia</taxon>
        <taxon>Eutheria</taxon>
        <taxon>Euarchontoglires</taxon>
        <taxon>Primates</taxon>
        <taxon>Haplorrhini</taxon>
        <taxon>Catarrhini</taxon>
        <taxon>Hominidae</taxon>
        <taxon>Homo</taxon>
    </lineage>
</organism>
<evidence type="ECO:0000250" key="1"/>
<evidence type="ECO:0000250" key="2">
    <source>
        <dbReference type="UniProtKB" id="Q9DCV3"/>
    </source>
</evidence>
<evidence type="ECO:0000255" key="3"/>
<evidence type="ECO:0000256" key="4">
    <source>
        <dbReference type="SAM" id="MobiDB-lite"/>
    </source>
</evidence>
<evidence type="ECO:0000269" key="5">
    <source>
    </source>
</evidence>
<evidence type="ECO:0000269" key="6">
    <source>
    </source>
</evidence>
<evidence type="ECO:0000269" key="7">
    <source>
    </source>
</evidence>
<evidence type="ECO:0000269" key="8">
    <source>
    </source>
</evidence>
<evidence type="ECO:0000269" key="9">
    <source>
    </source>
</evidence>
<evidence type="ECO:0000269" key="10">
    <source>
    </source>
</evidence>
<evidence type="ECO:0000269" key="11">
    <source>
    </source>
</evidence>
<evidence type="ECO:0000269" key="12">
    <source>
    </source>
</evidence>
<evidence type="ECO:0000303" key="13">
    <source ref="7"/>
</evidence>
<evidence type="ECO:0000305" key="14"/>
<evidence type="ECO:0000305" key="15">
    <source>
    </source>
</evidence>
<evidence type="ECO:0000305" key="16">
    <source>
    </source>
</evidence>
<evidence type="ECO:0000305" key="17">
    <source>
    </source>
</evidence>
<evidence type="ECO:0000312" key="18">
    <source>
        <dbReference type="HGNC" id="HGNC:16940"/>
    </source>
</evidence>
<gene>
    <name evidence="18" type="primary">DGAT2</name>
    <name type="ORF">HMFN1045</name>
    <name type="ORF">UNQ738/PRO1433</name>
</gene>
<feature type="chain" id="PRO_0000249045" description="Diacylglycerol O-acyltransferase 2">
    <location>
        <begin position="1"/>
        <end position="388"/>
    </location>
</feature>
<feature type="topological domain" description="Cytoplasmic" evidence="3">
    <location>
        <begin position="1"/>
        <end position="69"/>
    </location>
</feature>
<feature type="transmembrane region" description="Helical" evidence="3">
    <location>
        <begin position="70"/>
        <end position="88"/>
    </location>
</feature>
<feature type="topological domain" description="Lumenal" evidence="3">
    <location>
        <begin position="89"/>
        <end position="92"/>
    </location>
</feature>
<feature type="transmembrane region" description="Helical" evidence="3">
    <location>
        <begin position="93"/>
        <end position="112"/>
    </location>
</feature>
<feature type="topological domain" description="Cytoplasmic" evidence="3">
    <location>
        <begin position="113"/>
        <end position="388"/>
    </location>
</feature>
<feature type="region of interest" description="Disordered" evidence="4">
    <location>
        <begin position="16"/>
        <end position="40"/>
    </location>
</feature>
<feature type="splice variant" id="VSP_020356" description="In isoform 2." evidence="13">
    <location>
        <begin position="41"/>
        <end position="83"/>
    </location>
</feature>
<feature type="sequence variant" id="VAR_077236" description="Found in patients with Charcot-Marie-Tooth disease; uncertain significance; dbSNP:rs869025595." evidence="9">
    <original>Y</original>
    <variation>H</variation>
    <location>
        <position position="223"/>
    </location>
</feature>
<feature type="sequence variant" id="VAR_033864" description="In dbSNP:rs34421064.">
    <original>R</original>
    <variation>G</variation>
    <location>
        <position position="317"/>
    </location>
</feature>
<feature type="sequence variant" id="VAR_033865" description="In dbSNP:rs34113941.">
    <original>M</original>
    <variation>I</variation>
    <location>
        <position position="361"/>
    </location>
</feature>
<feature type="sequence conflict" description="In Ref. 7; AAV35727." evidence="14" ref="7">
    <original>W</original>
    <variation>C</variation>
    <location>
        <position position="295"/>
    </location>
</feature>
<feature type="sequence conflict" description="In Ref. 7; AAV35727." evidence="14" ref="7">
    <original>Q</original>
    <variation>H</variation>
    <location>
        <position position="304"/>
    </location>
</feature>